<comment type="function">
    <text evidence="1">NAD-binding protein involved in the addition of a carboxymethylaminomethyl (cmnm) group at the wobble position (U34) of certain tRNAs, forming tRNA-cmnm(5)s(2)U34.</text>
</comment>
<comment type="cofactor">
    <cofactor evidence="1">
        <name>FAD</name>
        <dbReference type="ChEBI" id="CHEBI:57692"/>
    </cofactor>
</comment>
<comment type="subunit">
    <text evidence="1">Homodimer. Heterotetramer of two MnmE and two MnmG subunits.</text>
</comment>
<comment type="subcellular location">
    <subcellularLocation>
        <location evidence="1">Cytoplasm</location>
    </subcellularLocation>
</comment>
<comment type="similarity">
    <text evidence="1">Belongs to the MnmG family.</text>
</comment>
<keyword id="KW-0963">Cytoplasm</keyword>
<keyword id="KW-0274">FAD</keyword>
<keyword id="KW-0285">Flavoprotein</keyword>
<keyword id="KW-0520">NAD</keyword>
<keyword id="KW-0819">tRNA processing</keyword>
<organism>
    <name type="scientific">Francisella tularensis subsp. tularensis (strain WY96-3418)</name>
    <dbReference type="NCBI Taxonomy" id="418136"/>
    <lineage>
        <taxon>Bacteria</taxon>
        <taxon>Pseudomonadati</taxon>
        <taxon>Pseudomonadota</taxon>
        <taxon>Gammaproteobacteria</taxon>
        <taxon>Thiotrichales</taxon>
        <taxon>Francisellaceae</taxon>
        <taxon>Francisella</taxon>
    </lineage>
</organism>
<gene>
    <name evidence="1" type="primary">mnmG</name>
    <name evidence="1" type="synonym">gidA</name>
    <name type="ordered locus">FTW_1252</name>
</gene>
<name>MNMG_FRATW</name>
<sequence>MIYDYGYDVIVVGGGHAGVEAASASARIGAKTLLLTHNIDTIGQMSCNPAIGGIGKGHLVKEIDAMGGVMAKAIDMAGIQFRILNSRKGPAVRATRAQADRLLYKKAINSLINNQENLDIFQDSVDDLVVENNTVCGAITKTGITFRAKKVVLTVGTFLGGKIHIGKVSNAGGRAGDQPSNALAARLRSLPFRVDRLKTGTPPRIDRRSVDFSVMEVQHGDNPTPYFSFFSKGKIEHPRQIPCYITYTNNETHKIITDNLDKSAMYSGLIEGIGPRYCPSIEDKVVRFADKERHQIFVEPEGLNSIELYPNGLSTSLPFEVQCNYIRSIKGFEKAFIMRPGYAIEYDFFDPRDLKPTLETKHIKNLYFAGQINGTTGYEEAGAQGLVASINAAISIDSDKSWYPTRADSYIGVLIDDLITKGTKEPYRMFTSRAEYRLILREDNADLRLSDKACELGLLSKEDQQHFISKKNAIIENIAMMKNTWIGPQTQKARDLEKFLDKKMTRESTLFDLLKRPEIDYSKLQQISELNLNLQDDAVIEQIEISAKYSGYIERQNKDIEKTATLEQKAIPTDFNYSQVKGLSNEVLQKLTEQKPTTLGEASRIPGITPAAISLLTIYMKKTGFIK</sequence>
<proteinExistence type="inferred from homology"/>
<accession>A4IYN2</accession>
<reference key="1">
    <citation type="journal article" date="2007" name="PLoS ONE">
        <title>Complete genomic characterization of a pathogenic A.II strain of Francisella tularensis subspecies tularensis.</title>
        <authorList>
            <person name="Beckstrom-Sternberg S.M."/>
            <person name="Auerbach R.K."/>
            <person name="Godbole S."/>
            <person name="Pearson J.V."/>
            <person name="Beckstrom-Sternberg J.S."/>
            <person name="Deng Z."/>
            <person name="Munk C."/>
            <person name="Kubota K."/>
            <person name="Zhou Y."/>
            <person name="Bruce D."/>
            <person name="Noronha J."/>
            <person name="Scheuermann R.H."/>
            <person name="Wang A."/>
            <person name="Wei X."/>
            <person name="Wang J."/>
            <person name="Hao J."/>
            <person name="Wagner D.M."/>
            <person name="Brettin T.S."/>
            <person name="Brown N."/>
            <person name="Gilna P."/>
            <person name="Keim P.S."/>
        </authorList>
    </citation>
    <scope>NUCLEOTIDE SEQUENCE [LARGE SCALE GENOMIC DNA]</scope>
    <source>
        <strain>WY96-3418</strain>
    </source>
</reference>
<dbReference type="EMBL" id="CP000608">
    <property type="protein sequence ID" value="ABO47033.1"/>
    <property type="molecule type" value="Genomic_DNA"/>
</dbReference>
<dbReference type="RefSeq" id="WP_003026475.1">
    <property type="nucleotide sequence ID" value="NC_009257.1"/>
</dbReference>
<dbReference type="SMR" id="A4IYN2"/>
<dbReference type="KEGG" id="ftw:FTW_1252"/>
<dbReference type="HOGENOM" id="CLU_007831_2_2_6"/>
<dbReference type="GO" id="GO:0005829">
    <property type="term" value="C:cytosol"/>
    <property type="evidence" value="ECO:0007669"/>
    <property type="project" value="TreeGrafter"/>
</dbReference>
<dbReference type="GO" id="GO:0050660">
    <property type="term" value="F:flavin adenine dinucleotide binding"/>
    <property type="evidence" value="ECO:0007669"/>
    <property type="project" value="UniProtKB-UniRule"/>
</dbReference>
<dbReference type="GO" id="GO:0030488">
    <property type="term" value="P:tRNA methylation"/>
    <property type="evidence" value="ECO:0007669"/>
    <property type="project" value="TreeGrafter"/>
</dbReference>
<dbReference type="GO" id="GO:0002098">
    <property type="term" value="P:tRNA wobble uridine modification"/>
    <property type="evidence" value="ECO:0007669"/>
    <property type="project" value="InterPro"/>
</dbReference>
<dbReference type="FunFam" id="1.10.10.1800:FF:000001">
    <property type="entry name" value="tRNA uridine 5-carboxymethylaminomethyl modification enzyme MnmG"/>
    <property type="match status" value="1"/>
</dbReference>
<dbReference type="FunFam" id="1.10.150.570:FF:000001">
    <property type="entry name" value="tRNA uridine 5-carboxymethylaminomethyl modification enzyme MnmG"/>
    <property type="match status" value="1"/>
</dbReference>
<dbReference type="FunFam" id="3.50.50.60:FF:000002">
    <property type="entry name" value="tRNA uridine 5-carboxymethylaminomethyl modification enzyme MnmG"/>
    <property type="match status" value="1"/>
</dbReference>
<dbReference type="FunFam" id="3.50.50.60:FF:000010">
    <property type="entry name" value="tRNA uridine 5-carboxymethylaminomethyl modification enzyme MnmG"/>
    <property type="match status" value="1"/>
</dbReference>
<dbReference type="Gene3D" id="3.50.50.60">
    <property type="entry name" value="FAD/NAD(P)-binding domain"/>
    <property type="match status" value="2"/>
</dbReference>
<dbReference type="Gene3D" id="1.10.150.570">
    <property type="entry name" value="GidA associated domain, C-terminal subdomain"/>
    <property type="match status" value="1"/>
</dbReference>
<dbReference type="Gene3D" id="1.10.10.1800">
    <property type="entry name" value="tRNA uridine 5-carboxymethylaminomethyl modification enzyme MnmG/GidA"/>
    <property type="match status" value="1"/>
</dbReference>
<dbReference type="HAMAP" id="MF_00129">
    <property type="entry name" value="MnmG_GidA"/>
    <property type="match status" value="1"/>
</dbReference>
<dbReference type="InterPro" id="IPR036188">
    <property type="entry name" value="FAD/NAD-bd_sf"/>
</dbReference>
<dbReference type="InterPro" id="IPR049312">
    <property type="entry name" value="GIDA_C_N"/>
</dbReference>
<dbReference type="InterPro" id="IPR004416">
    <property type="entry name" value="MnmG"/>
</dbReference>
<dbReference type="InterPro" id="IPR002218">
    <property type="entry name" value="MnmG-rel"/>
</dbReference>
<dbReference type="InterPro" id="IPR020595">
    <property type="entry name" value="MnmG-rel_CS"/>
</dbReference>
<dbReference type="InterPro" id="IPR026904">
    <property type="entry name" value="MnmG_C"/>
</dbReference>
<dbReference type="InterPro" id="IPR047001">
    <property type="entry name" value="MnmG_C_subdom"/>
</dbReference>
<dbReference type="InterPro" id="IPR044920">
    <property type="entry name" value="MnmG_C_subdom_sf"/>
</dbReference>
<dbReference type="InterPro" id="IPR040131">
    <property type="entry name" value="MnmG_N"/>
</dbReference>
<dbReference type="NCBIfam" id="TIGR00136">
    <property type="entry name" value="mnmG_gidA"/>
    <property type="match status" value="1"/>
</dbReference>
<dbReference type="PANTHER" id="PTHR11806">
    <property type="entry name" value="GLUCOSE INHIBITED DIVISION PROTEIN A"/>
    <property type="match status" value="1"/>
</dbReference>
<dbReference type="PANTHER" id="PTHR11806:SF0">
    <property type="entry name" value="PROTEIN MTO1 HOMOLOG, MITOCHONDRIAL"/>
    <property type="match status" value="1"/>
</dbReference>
<dbReference type="Pfam" id="PF01134">
    <property type="entry name" value="GIDA"/>
    <property type="match status" value="1"/>
</dbReference>
<dbReference type="Pfam" id="PF21680">
    <property type="entry name" value="GIDA_C_1st"/>
    <property type="match status" value="1"/>
</dbReference>
<dbReference type="Pfam" id="PF13932">
    <property type="entry name" value="SAM_GIDA_C"/>
    <property type="match status" value="1"/>
</dbReference>
<dbReference type="SMART" id="SM01228">
    <property type="entry name" value="GIDA_assoc_3"/>
    <property type="match status" value="1"/>
</dbReference>
<dbReference type="SUPFAM" id="SSF51905">
    <property type="entry name" value="FAD/NAD(P)-binding domain"/>
    <property type="match status" value="1"/>
</dbReference>
<dbReference type="PROSITE" id="PS01280">
    <property type="entry name" value="GIDA_1"/>
    <property type="match status" value="1"/>
</dbReference>
<feature type="chain" id="PRO_1000016602" description="tRNA uridine 5-carboxymethylaminomethyl modification enzyme MnmG">
    <location>
        <begin position="1"/>
        <end position="627"/>
    </location>
</feature>
<feature type="binding site" evidence="1">
    <location>
        <begin position="13"/>
        <end position="18"/>
    </location>
    <ligand>
        <name>FAD</name>
        <dbReference type="ChEBI" id="CHEBI:57692"/>
    </ligand>
</feature>
<feature type="binding site" evidence="1">
    <location>
        <position position="125"/>
    </location>
    <ligand>
        <name>FAD</name>
        <dbReference type="ChEBI" id="CHEBI:57692"/>
    </ligand>
</feature>
<feature type="binding site" evidence="1">
    <location>
        <position position="180"/>
    </location>
    <ligand>
        <name>FAD</name>
        <dbReference type="ChEBI" id="CHEBI:57692"/>
    </ligand>
</feature>
<feature type="binding site" evidence="1">
    <location>
        <begin position="274"/>
        <end position="288"/>
    </location>
    <ligand>
        <name>NAD(+)</name>
        <dbReference type="ChEBI" id="CHEBI:57540"/>
    </ligand>
</feature>
<feature type="binding site" evidence="1">
    <location>
        <position position="371"/>
    </location>
    <ligand>
        <name>FAD</name>
        <dbReference type="ChEBI" id="CHEBI:57692"/>
    </ligand>
</feature>
<protein>
    <recommendedName>
        <fullName evidence="1">tRNA uridine 5-carboxymethylaminomethyl modification enzyme MnmG</fullName>
    </recommendedName>
    <alternativeName>
        <fullName evidence="1">Glucose-inhibited division protein A</fullName>
    </alternativeName>
</protein>
<evidence type="ECO:0000255" key="1">
    <source>
        <dbReference type="HAMAP-Rule" id="MF_00129"/>
    </source>
</evidence>